<keyword id="KW-0106">Calcium</keyword>
<keyword id="KW-1015">Disulfide bond</keyword>
<keyword id="KW-0245">EGF-like domain</keyword>
<keyword id="KW-0325">Glycoprotein</keyword>
<keyword id="KW-0479">Metal-binding</keyword>
<keyword id="KW-1185">Reference proteome</keyword>
<keyword id="KW-0677">Repeat</keyword>
<keyword id="KW-0964">Secreted</keyword>
<keyword id="KW-0732">Signal</keyword>
<protein>
    <recommendedName>
        <fullName>Protein kinase C-binding protein NELL2a</fullName>
    </recommendedName>
    <alternativeName>
        <fullName>NEL-like protein 2</fullName>
    </alternativeName>
</protein>
<dbReference type="EMBL" id="BC128854">
    <property type="protein sequence ID" value="AAI28855.1"/>
    <property type="molecule type" value="mRNA"/>
</dbReference>
<dbReference type="RefSeq" id="NP_001073544.1">
    <property type="nucleotide sequence ID" value="NM_001080075.1"/>
</dbReference>
<dbReference type="SMR" id="A1A5Y0"/>
<dbReference type="FunCoup" id="A1A5Y0">
    <property type="interactions" value="17"/>
</dbReference>
<dbReference type="STRING" id="7955.ENSDARP00000111598"/>
<dbReference type="GlyCosmos" id="A1A5Y0">
    <property type="glycosylation" value="6 sites, No reported glycans"/>
</dbReference>
<dbReference type="PaxDb" id="7955-ENSDARP00000107571"/>
<dbReference type="GeneID" id="790930"/>
<dbReference type="KEGG" id="dre:790930"/>
<dbReference type="AGR" id="ZFIN:ZDB-GENE-030131-7972"/>
<dbReference type="CTD" id="790930"/>
<dbReference type="ZFIN" id="ZDB-GENE-030131-7972">
    <property type="gene designation" value="nell2a"/>
</dbReference>
<dbReference type="eggNOG" id="KOG1217">
    <property type="taxonomic scope" value="Eukaryota"/>
</dbReference>
<dbReference type="InParanoid" id="A1A5Y0"/>
<dbReference type="OrthoDB" id="6516201at2759"/>
<dbReference type="PhylomeDB" id="A1A5Y0"/>
<dbReference type="PRO" id="PR:A1A5Y0"/>
<dbReference type="Proteomes" id="UP000000437">
    <property type="component" value="Chromosome 25"/>
</dbReference>
<dbReference type="GO" id="GO:0005737">
    <property type="term" value="C:cytoplasm"/>
    <property type="evidence" value="ECO:0000318"/>
    <property type="project" value="GO_Central"/>
</dbReference>
<dbReference type="GO" id="GO:0005576">
    <property type="term" value="C:extracellular region"/>
    <property type="evidence" value="ECO:0000250"/>
    <property type="project" value="UniProtKB"/>
</dbReference>
<dbReference type="GO" id="GO:0005615">
    <property type="term" value="C:extracellular space"/>
    <property type="evidence" value="ECO:0000318"/>
    <property type="project" value="GO_Central"/>
</dbReference>
<dbReference type="GO" id="GO:0005509">
    <property type="term" value="F:calcium ion binding"/>
    <property type="evidence" value="ECO:0000250"/>
    <property type="project" value="UniProtKB"/>
</dbReference>
<dbReference type="GO" id="GO:0008201">
    <property type="term" value="F:heparin binding"/>
    <property type="evidence" value="ECO:0000318"/>
    <property type="project" value="GO_Central"/>
</dbReference>
<dbReference type="GO" id="GO:0005080">
    <property type="term" value="F:protein kinase C binding"/>
    <property type="evidence" value="ECO:0000318"/>
    <property type="project" value="GO_Central"/>
</dbReference>
<dbReference type="GO" id="GO:0009566">
    <property type="term" value="P:fertilization"/>
    <property type="evidence" value="ECO:0000250"/>
    <property type="project" value="UniProtKB"/>
</dbReference>
<dbReference type="CDD" id="cd00054">
    <property type="entry name" value="EGF_CA"/>
    <property type="match status" value="4"/>
</dbReference>
<dbReference type="CDD" id="cd00110">
    <property type="entry name" value="LamG"/>
    <property type="match status" value="1"/>
</dbReference>
<dbReference type="FunFam" id="2.10.25.10:FF:000038">
    <property type="entry name" value="Fibrillin 2"/>
    <property type="match status" value="1"/>
</dbReference>
<dbReference type="FunFam" id="2.10.25.10:FF:000121">
    <property type="entry name" value="Neural EGFL like 2"/>
    <property type="match status" value="1"/>
</dbReference>
<dbReference type="FunFam" id="2.10.25.10:FF:000211">
    <property type="entry name" value="Protein kinase C-binding protein NELL1"/>
    <property type="match status" value="1"/>
</dbReference>
<dbReference type="FunFam" id="2.60.120.200:FF:000015">
    <property type="entry name" value="protein kinase C-binding protein NELL1"/>
    <property type="match status" value="1"/>
</dbReference>
<dbReference type="FunFam" id="2.10.25.10:FF:000111">
    <property type="entry name" value="Protein kinase C-binding protein NELL2"/>
    <property type="match status" value="1"/>
</dbReference>
<dbReference type="Gene3D" id="2.60.120.200">
    <property type="match status" value="1"/>
</dbReference>
<dbReference type="Gene3D" id="6.20.200.20">
    <property type="match status" value="2"/>
</dbReference>
<dbReference type="Gene3D" id="2.10.70.10">
    <property type="entry name" value="Complement Module, domain 1"/>
    <property type="match status" value="1"/>
</dbReference>
<dbReference type="Gene3D" id="2.10.25.10">
    <property type="entry name" value="Laminin"/>
    <property type="match status" value="6"/>
</dbReference>
<dbReference type="InterPro" id="IPR013320">
    <property type="entry name" value="ConA-like_dom_sf"/>
</dbReference>
<dbReference type="InterPro" id="IPR001881">
    <property type="entry name" value="EGF-like_Ca-bd_dom"/>
</dbReference>
<dbReference type="InterPro" id="IPR000742">
    <property type="entry name" value="EGF-like_dom"/>
</dbReference>
<dbReference type="InterPro" id="IPR000152">
    <property type="entry name" value="EGF-type_Asp/Asn_hydroxyl_site"/>
</dbReference>
<dbReference type="InterPro" id="IPR018097">
    <property type="entry name" value="EGF_Ca-bd_CS"/>
</dbReference>
<dbReference type="InterPro" id="IPR024731">
    <property type="entry name" value="EGF_dom"/>
</dbReference>
<dbReference type="InterPro" id="IPR009030">
    <property type="entry name" value="Growth_fac_rcpt_cys_sf"/>
</dbReference>
<dbReference type="InterPro" id="IPR001791">
    <property type="entry name" value="Laminin_G"/>
</dbReference>
<dbReference type="InterPro" id="IPR049883">
    <property type="entry name" value="NOTCH1_EGF-like"/>
</dbReference>
<dbReference type="InterPro" id="IPR051586">
    <property type="entry name" value="PKC-binding_NELL"/>
</dbReference>
<dbReference type="InterPro" id="IPR048287">
    <property type="entry name" value="TSPN-like_N"/>
</dbReference>
<dbReference type="InterPro" id="IPR001007">
    <property type="entry name" value="VWF_dom"/>
</dbReference>
<dbReference type="PANTHER" id="PTHR24042">
    <property type="entry name" value="NEL HOMOLOG"/>
    <property type="match status" value="1"/>
</dbReference>
<dbReference type="PANTHER" id="PTHR24042:SF0">
    <property type="entry name" value="PROTEIN KINASE C-BINDING PROTEIN NELL2"/>
    <property type="match status" value="1"/>
</dbReference>
<dbReference type="Pfam" id="PF12947">
    <property type="entry name" value="EGF_3"/>
    <property type="match status" value="1"/>
</dbReference>
<dbReference type="Pfam" id="PF07645">
    <property type="entry name" value="EGF_CA"/>
    <property type="match status" value="3"/>
</dbReference>
<dbReference type="Pfam" id="PF02210">
    <property type="entry name" value="Laminin_G_2"/>
    <property type="match status" value="1"/>
</dbReference>
<dbReference type="Pfam" id="PF00093">
    <property type="entry name" value="VWC"/>
    <property type="match status" value="2"/>
</dbReference>
<dbReference type="SMART" id="SM00181">
    <property type="entry name" value="EGF"/>
    <property type="match status" value="6"/>
</dbReference>
<dbReference type="SMART" id="SM00179">
    <property type="entry name" value="EGF_CA"/>
    <property type="match status" value="5"/>
</dbReference>
<dbReference type="SMART" id="SM00282">
    <property type="entry name" value="LamG"/>
    <property type="match status" value="1"/>
</dbReference>
<dbReference type="SMART" id="SM00210">
    <property type="entry name" value="TSPN"/>
    <property type="match status" value="1"/>
</dbReference>
<dbReference type="SMART" id="SM00214">
    <property type="entry name" value="VWC"/>
    <property type="match status" value="3"/>
</dbReference>
<dbReference type="SMART" id="SM00215">
    <property type="entry name" value="VWC_out"/>
    <property type="match status" value="2"/>
</dbReference>
<dbReference type="SUPFAM" id="SSF49899">
    <property type="entry name" value="Concanavalin A-like lectins/glucanases"/>
    <property type="match status" value="1"/>
</dbReference>
<dbReference type="SUPFAM" id="SSF57603">
    <property type="entry name" value="FnI-like domain"/>
    <property type="match status" value="2"/>
</dbReference>
<dbReference type="SUPFAM" id="SSF57184">
    <property type="entry name" value="Growth factor receptor domain"/>
    <property type="match status" value="2"/>
</dbReference>
<dbReference type="PROSITE" id="PS00010">
    <property type="entry name" value="ASX_HYDROXYL"/>
    <property type="match status" value="3"/>
</dbReference>
<dbReference type="PROSITE" id="PS00022">
    <property type="entry name" value="EGF_1"/>
    <property type="match status" value="1"/>
</dbReference>
<dbReference type="PROSITE" id="PS01186">
    <property type="entry name" value="EGF_2"/>
    <property type="match status" value="3"/>
</dbReference>
<dbReference type="PROSITE" id="PS50026">
    <property type="entry name" value="EGF_3"/>
    <property type="match status" value="6"/>
</dbReference>
<dbReference type="PROSITE" id="PS01187">
    <property type="entry name" value="EGF_CA"/>
    <property type="match status" value="3"/>
</dbReference>
<dbReference type="PROSITE" id="PS50025">
    <property type="entry name" value="LAM_G_DOMAIN"/>
    <property type="match status" value="1"/>
</dbReference>
<dbReference type="PROSITE" id="PS01208">
    <property type="entry name" value="VWFC_1"/>
    <property type="match status" value="2"/>
</dbReference>
<dbReference type="PROSITE" id="PS50184">
    <property type="entry name" value="VWFC_2"/>
    <property type="match status" value="2"/>
</dbReference>
<feature type="signal peptide" evidence="3">
    <location>
        <begin position="1"/>
        <end position="18"/>
    </location>
</feature>
<feature type="chain" id="PRO_0000354683" description="Protein kinase C-binding protein NELL2a">
    <location>
        <begin position="19"/>
        <end position="811"/>
    </location>
</feature>
<feature type="domain" description="Laminin G-like" evidence="6">
    <location>
        <begin position="54"/>
        <end position="225"/>
    </location>
</feature>
<feature type="domain" description="VWFC 1" evidence="7">
    <location>
        <begin position="269"/>
        <end position="328"/>
    </location>
</feature>
<feature type="domain" description="EGF-like 1" evidence="5">
    <location>
        <begin position="395"/>
        <end position="437"/>
    </location>
</feature>
<feature type="domain" description="EGF-like 2; calcium-binding" evidence="5">
    <location>
        <begin position="438"/>
        <end position="479"/>
    </location>
</feature>
<feature type="domain" description="EGF-like 3; calcium-binding" evidence="5">
    <location>
        <begin position="480"/>
        <end position="520"/>
    </location>
</feature>
<feature type="domain" description="EGF-like 4" evidence="5">
    <location>
        <begin position="521"/>
        <end position="551"/>
    </location>
</feature>
<feature type="domain" description="EGF-like 5; calcium-binding" evidence="5">
    <location>
        <begin position="553"/>
        <end position="592"/>
    </location>
</feature>
<feature type="domain" description="EGF-like 6; calcium-binding" evidence="5">
    <location>
        <begin position="600"/>
        <end position="635"/>
    </location>
</feature>
<feature type="domain" description="VWFC 2" evidence="7">
    <location>
        <begin position="636"/>
        <end position="691"/>
    </location>
</feature>
<feature type="domain" description="VWFC 3" evidence="7">
    <location>
        <begin position="696"/>
        <end position="754"/>
    </location>
</feature>
<feature type="binding site" evidence="3">
    <location>
        <position position="438"/>
    </location>
    <ligand>
        <name>Ca(2+)</name>
        <dbReference type="ChEBI" id="CHEBI:29108"/>
    </ligand>
</feature>
<feature type="binding site" evidence="3">
    <location>
        <position position="439"/>
    </location>
    <ligand>
        <name>Ca(2+)</name>
        <dbReference type="ChEBI" id="CHEBI:29108"/>
    </ligand>
</feature>
<feature type="binding site" evidence="3">
    <location>
        <position position="441"/>
    </location>
    <ligand>
        <name>Ca(2+)</name>
        <dbReference type="ChEBI" id="CHEBI:29108"/>
    </ligand>
</feature>
<feature type="binding site" evidence="3">
    <location>
        <position position="457"/>
    </location>
    <ligand>
        <name>Ca(2+)</name>
        <dbReference type="ChEBI" id="CHEBI:29108"/>
    </ligand>
</feature>
<feature type="binding site" evidence="3">
    <location>
        <position position="458"/>
    </location>
    <ligand>
        <name>Ca(2+)</name>
        <dbReference type="ChEBI" id="CHEBI:29108"/>
    </ligand>
</feature>
<feature type="binding site" evidence="3">
    <location>
        <position position="461"/>
    </location>
    <ligand>
        <name>Ca(2+)</name>
        <dbReference type="ChEBI" id="CHEBI:29108"/>
    </ligand>
</feature>
<feature type="binding site" evidence="3">
    <location>
        <position position="553"/>
    </location>
    <ligand>
        <name>Ca(2+)</name>
        <dbReference type="ChEBI" id="CHEBI:29108"/>
    </ligand>
</feature>
<feature type="binding site" evidence="3">
    <location>
        <position position="554"/>
    </location>
    <ligand>
        <name>Ca(2+)</name>
        <dbReference type="ChEBI" id="CHEBI:29108"/>
    </ligand>
</feature>
<feature type="binding site" evidence="3">
    <location>
        <position position="556"/>
    </location>
    <ligand>
        <name>Ca(2+)</name>
        <dbReference type="ChEBI" id="CHEBI:29108"/>
    </ligand>
</feature>
<feature type="binding site" evidence="3">
    <location>
        <position position="572"/>
    </location>
    <ligand>
        <name>Ca(2+)</name>
        <dbReference type="ChEBI" id="CHEBI:29108"/>
    </ligand>
</feature>
<feature type="binding site" evidence="3">
    <location>
        <position position="573"/>
    </location>
    <ligand>
        <name>Ca(2+)</name>
        <dbReference type="ChEBI" id="CHEBI:29108"/>
    </ligand>
</feature>
<feature type="binding site" evidence="3">
    <location>
        <position position="576"/>
    </location>
    <ligand>
        <name>Ca(2+)</name>
        <dbReference type="ChEBI" id="CHEBI:29108"/>
    </ligand>
</feature>
<feature type="binding site" evidence="3">
    <location>
        <position position="600"/>
    </location>
    <ligand>
        <name>Ca(2+)</name>
        <dbReference type="ChEBI" id="CHEBI:29108"/>
    </ligand>
</feature>
<feature type="binding site" evidence="3">
    <location>
        <position position="601"/>
    </location>
    <ligand>
        <name>Ca(2+)</name>
        <dbReference type="ChEBI" id="CHEBI:29108"/>
    </ligand>
</feature>
<feature type="binding site" evidence="3">
    <location>
        <position position="603"/>
    </location>
    <ligand>
        <name>Ca(2+)</name>
        <dbReference type="ChEBI" id="CHEBI:29108"/>
    </ligand>
</feature>
<feature type="binding site" evidence="3">
    <location>
        <position position="619"/>
    </location>
    <ligand>
        <name>Ca(2+)</name>
        <dbReference type="ChEBI" id="CHEBI:29108"/>
    </ligand>
</feature>
<feature type="binding site" evidence="3">
    <location>
        <position position="620"/>
    </location>
    <ligand>
        <name>Ca(2+)</name>
        <dbReference type="ChEBI" id="CHEBI:29108"/>
    </ligand>
</feature>
<feature type="binding site" evidence="3">
    <location>
        <position position="623"/>
    </location>
    <ligand>
        <name>Ca(2+)</name>
        <dbReference type="ChEBI" id="CHEBI:29108"/>
    </ligand>
</feature>
<feature type="glycosylation site" description="N-linked (GlcNAc...) asparagine" evidence="4">
    <location>
        <position position="222"/>
    </location>
</feature>
<feature type="glycosylation site" description="N-linked (GlcNAc...) asparagine" evidence="4">
    <location>
        <position position="290"/>
    </location>
</feature>
<feature type="glycosylation site" description="N-linked (GlcNAc...) asparagine" evidence="4">
    <location>
        <position position="295"/>
    </location>
</feature>
<feature type="glycosylation site" description="N-linked (GlcNAc...) asparagine" evidence="4">
    <location>
        <position position="515"/>
    </location>
</feature>
<feature type="glycosylation site" description="N-linked (GlcNAc...) asparagine" evidence="4">
    <location>
        <position position="613"/>
    </location>
</feature>
<feature type="glycosylation site" description="N-linked (GlcNAc...) asparagine" evidence="4">
    <location>
        <position position="633"/>
    </location>
</feature>
<feature type="disulfide bond" evidence="3">
    <location>
        <begin position="399"/>
        <end position="411"/>
    </location>
</feature>
<feature type="disulfide bond" evidence="3">
    <location>
        <begin position="405"/>
        <end position="420"/>
    </location>
</feature>
<feature type="disulfide bond" evidence="3">
    <location>
        <begin position="422"/>
        <end position="436"/>
    </location>
</feature>
<feature type="disulfide bond" evidence="3">
    <location>
        <begin position="442"/>
        <end position="455"/>
    </location>
</feature>
<feature type="disulfide bond" evidence="3">
    <location>
        <begin position="449"/>
        <end position="464"/>
    </location>
</feature>
<feature type="disulfide bond" evidence="3">
    <location>
        <begin position="466"/>
        <end position="478"/>
    </location>
</feature>
<feature type="disulfide bond" evidence="3">
    <location>
        <begin position="484"/>
        <end position="497"/>
    </location>
</feature>
<feature type="disulfide bond" evidence="3">
    <location>
        <begin position="491"/>
        <end position="506"/>
    </location>
</feature>
<feature type="disulfide bond" evidence="3">
    <location>
        <begin position="508"/>
        <end position="519"/>
    </location>
</feature>
<feature type="disulfide bond" evidence="3">
    <location>
        <begin position="523"/>
        <end position="533"/>
    </location>
</feature>
<feature type="disulfide bond" evidence="3">
    <location>
        <begin position="527"/>
        <end position="539"/>
    </location>
</feature>
<feature type="disulfide bond" evidence="3">
    <location>
        <begin position="541"/>
        <end position="550"/>
    </location>
</feature>
<feature type="disulfide bond" evidence="3">
    <location>
        <begin position="557"/>
        <end position="570"/>
    </location>
</feature>
<feature type="disulfide bond" evidence="3">
    <location>
        <begin position="564"/>
        <end position="579"/>
    </location>
</feature>
<feature type="disulfide bond" evidence="3">
    <location>
        <begin position="581"/>
        <end position="598"/>
    </location>
</feature>
<feature type="disulfide bond" evidence="3">
    <location>
        <begin position="604"/>
        <end position="617"/>
    </location>
</feature>
<feature type="disulfide bond" evidence="3">
    <location>
        <begin position="611"/>
        <end position="626"/>
    </location>
</feature>
<feature type="disulfide bond" evidence="3">
    <location>
        <begin position="628"/>
        <end position="634"/>
    </location>
</feature>
<gene>
    <name type="primary">nell2a</name>
    <name type="ORF">zgc:158375</name>
</gene>
<accession>A1A5Y0</accession>
<proteinExistence type="evidence at transcript level"/>
<comment type="function">
    <text evidence="1 2">May regulate neuronal differentiation, polarization and axon guidance.</text>
</comment>
<comment type="subunit">
    <text evidence="2">Homotrimer.</text>
</comment>
<comment type="subcellular location">
    <subcellularLocation>
        <location evidence="2">Secreted</location>
    </subcellularLocation>
</comment>
<name>NELL2_DANRE</name>
<evidence type="ECO:0000250" key="1">
    <source>
        <dbReference type="UniProtKB" id="Q61220"/>
    </source>
</evidence>
<evidence type="ECO:0000250" key="2">
    <source>
        <dbReference type="UniProtKB" id="Q62918"/>
    </source>
</evidence>
<evidence type="ECO:0000250" key="3">
    <source>
        <dbReference type="UniProtKB" id="Q99435"/>
    </source>
</evidence>
<evidence type="ECO:0000255" key="4"/>
<evidence type="ECO:0000255" key="5">
    <source>
        <dbReference type="PROSITE-ProRule" id="PRU00076"/>
    </source>
</evidence>
<evidence type="ECO:0000255" key="6">
    <source>
        <dbReference type="PROSITE-ProRule" id="PRU00122"/>
    </source>
</evidence>
<evidence type="ECO:0000255" key="7">
    <source>
        <dbReference type="PROSITE-ProRule" id="PRU00220"/>
    </source>
</evidence>
<sequence length="811" mass="89142">MAFLQLFVGLLCGAAVSAFGVDPAVRIGVFQEFSPGQGFSGVTQVKGFRDDTRAFMFQGSSRSVRVPDAAAGHMLQKLRGKTEFSIALTLKQDKLNSGVILSIHHGEHRLLELESSGQKSEVRLHFRTGLQQTHTEIFPFTLADEQWHRVSVSISAAHLTLYVDCNRIYERVVPVPLMEIPEDSSFWVGQRNSAHGLFKGIMQDLQILVMPQGFITQCPDLNRTCPTCNDFHGLVQKIMELQDILAKTSSKLSLAEEKMSGLDSCYCERTCRVKDQIYREEQSWTDGCKNCTCSNGTVRCEKILCPPLDCPDGTTPAYVTGTCCKECQPMCLFSEQTLVEGQSCAVHHPSGLCQLFQCRDRTMHRVPGAEDCPALSCAESDQITLTDRCCRVCRGHDFCAEENICSENSDCVNLDAGASCGCKNGFRPLRLDSAYCEDIDECAEGRHYCRENTECVNTAGSFMCVCHTGFIRIDDYSCTEHDECASGQHDCDENALCFNTVGGHSCSCKPGYSGNGTVCRALCDGRCLNGGSCASPNVCVCVQGFSGQNCETDIDECSEGLVQCAAHATCVNLPGWYHCECRDGYHDNEVFSANGESCRDIDECRTGRSTCANDTVCFNLDGGFDCRCPHGHNCSGDCIHNSRVRHNAQIWVLDTDHCSVCSCQEGQVKCRRMVCDCENPTVDVLCCPECDPRLTSQCLHQNGLLTYSSGDTWIDSCQRCQCLQGEVDCWPLSCPPVDCDFTLVPEGECCPRCVSDPCQAHAVRSDISKTCIDEHGITRFSGSAWVKHGTHCTLCQCKNGHVCCSVDPMCL</sequence>
<reference key="1">
    <citation type="submission" date="2006-12" db="EMBL/GenBank/DDBJ databases">
        <authorList>
            <consortium name="NIH - Zebrafish Gene Collection (ZGC) project"/>
        </authorList>
    </citation>
    <scope>NUCLEOTIDE SEQUENCE [LARGE SCALE MRNA]</scope>
    <source>
        <tissue>Embryo</tissue>
    </source>
</reference>
<organism>
    <name type="scientific">Danio rerio</name>
    <name type="common">Zebrafish</name>
    <name type="synonym">Brachydanio rerio</name>
    <dbReference type="NCBI Taxonomy" id="7955"/>
    <lineage>
        <taxon>Eukaryota</taxon>
        <taxon>Metazoa</taxon>
        <taxon>Chordata</taxon>
        <taxon>Craniata</taxon>
        <taxon>Vertebrata</taxon>
        <taxon>Euteleostomi</taxon>
        <taxon>Actinopterygii</taxon>
        <taxon>Neopterygii</taxon>
        <taxon>Teleostei</taxon>
        <taxon>Ostariophysi</taxon>
        <taxon>Cypriniformes</taxon>
        <taxon>Danionidae</taxon>
        <taxon>Danioninae</taxon>
        <taxon>Danio</taxon>
    </lineage>
</organism>